<dbReference type="EMBL" id="CP000437">
    <property type="protein sequence ID" value="ABI82259.1"/>
    <property type="molecule type" value="Genomic_DNA"/>
</dbReference>
<dbReference type="RefSeq" id="WP_003027200.1">
    <property type="nucleotide sequence ID" value="NC_017463.1"/>
</dbReference>
<dbReference type="SMR" id="Q0BNS5"/>
<dbReference type="GeneID" id="75264259"/>
<dbReference type="KEGG" id="fth:FTH_0233"/>
<dbReference type="GO" id="GO:1990904">
    <property type="term" value="C:ribonucleoprotein complex"/>
    <property type="evidence" value="ECO:0007669"/>
    <property type="project" value="UniProtKB-KW"/>
</dbReference>
<dbReference type="GO" id="GO:0005840">
    <property type="term" value="C:ribosome"/>
    <property type="evidence" value="ECO:0007669"/>
    <property type="project" value="UniProtKB-KW"/>
</dbReference>
<dbReference type="GO" id="GO:0019843">
    <property type="term" value="F:rRNA binding"/>
    <property type="evidence" value="ECO:0007669"/>
    <property type="project" value="UniProtKB-UniRule"/>
</dbReference>
<dbReference type="GO" id="GO:0003735">
    <property type="term" value="F:structural constituent of ribosome"/>
    <property type="evidence" value="ECO:0007669"/>
    <property type="project" value="InterPro"/>
</dbReference>
<dbReference type="GO" id="GO:0006412">
    <property type="term" value="P:translation"/>
    <property type="evidence" value="ECO:0007669"/>
    <property type="project" value="UniProtKB-UniRule"/>
</dbReference>
<dbReference type="FunFam" id="3.30.70.330:FF:000001">
    <property type="entry name" value="50S ribosomal protein L23"/>
    <property type="match status" value="1"/>
</dbReference>
<dbReference type="Gene3D" id="3.30.70.330">
    <property type="match status" value="1"/>
</dbReference>
<dbReference type="HAMAP" id="MF_01369_B">
    <property type="entry name" value="Ribosomal_uL23_B"/>
    <property type="match status" value="1"/>
</dbReference>
<dbReference type="InterPro" id="IPR012677">
    <property type="entry name" value="Nucleotide-bd_a/b_plait_sf"/>
</dbReference>
<dbReference type="InterPro" id="IPR013025">
    <property type="entry name" value="Ribosomal_uL23-like"/>
</dbReference>
<dbReference type="InterPro" id="IPR012678">
    <property type="entry name" value="Ribosomal_uL23/eL15/eS24_sf"/>
</dbReference>
<dbReference type="InterPro" id="IPR001014">
    <property type="entry name" value="Ribosomal_uL23_CS"/>
</dbReference>
<dbReference type="NCBIfam" id="NF004359">
    <property type="entry name" value="PRK05738.1-3"/>
    <property type="match status" value="1"/>
</dbReference>
<dbReference type="NCBIfam" id="NF004363">
    <property type="entry name" value="PRK05738.2-4"/>
    <property type="match status" value="1"/>
</dbReference>
<dbReference type="PANTHER" id="PTHR11620">
    <property type="entry name" value="60S RIBOSOMAL PROTEIN L23A"/>
    <property type="match status" value="1"/>
</dbReference>
<dbReference type="Pfam" id="PF00276">
    <property type="entry name" value="Ribosomal_L23"/>
    <property type="match status" value="1"/>
</dbReference>
<dbReference type="SUPFAM" id="SSF54189">
    <property type="entry name" value="Ribosomal proteins S24e, L23 and L15e"/>
    <property type="match status" value="1"/>
</dbReference>
<dbReference type="PROSITE" id="PS00050">
    <property type="entry name" value="RIBOSOMAL_L23"/>
    <property type="match status" value="1"/>
</dbReference>
<name>RL23_FRATO</name>
<keyword id="KW-0687">Ribonucleoprotein</keyword>
<keyword id="KW-0689">Ribosomal protein</keyword>
<keyword id="KW-0694">RNA-binding</keyword>
<keyword id="KW-0699">rRNA-binding</keyword>
<gene>
    <name evidence="1" type="primary">rplW</name>
    <name type="ordered locus">FTH_0233</name>
</gene>
<feature type="chain" id="PRO_0000272747" description="Large ribosomal subunit protein uL23">
    <location>
        <begin position="1"/>
        <end position="99"/>
    </location>
</feature>
<reference key="1">
    <citation type="journal article" date="2006" name="J. Bacteriol.">
        <title>Chromosome rearrangement and diversification of Francisella tularensis revealed by the type B (OSU18) genome sequence.</title>
        <authorList>
            <person name="Petrosino J.F."/>
            <person name="Xiang Q."/>
            <person name="Karpathy S.E."/>
            <person name="Jiang H."/>
            <person name="Yerrapragada S."/>
            <person name="Liu Y."/>
            <person name="Gioia J."/>
            <person name="Hemphill L."/>
            <person name="Gonzalez A."/>
            <person name="Raghavan T.M."/>
            <person name="Uzman A."/>
            <person name="Fox G.E."/>
            <person name="Highlander S."/>
            <person name="Reichard M."/>
            <person name="Morton R.J."/>
            <person name="Clinkenbeard K.D."/>
            <person name="Weinstock G.M."/>
        </authorList>
    </citation>
    <scope>NUCLEOTIDE SEQUENCE [LARGE SCALE GENOMIC DNA]</scope>
    <source>
        <strain>OSU18</strain>
    </source>
</reference>
<comment type="function">
    <text evidence="1">One of the early assembly proteins it binds 23S rRNA. One of the proteins that surrounds the polypeptide exit tunnel on the outside of the ribosome. Forms the main docking site for trigger factor binding to the ribosome.</text>
</comment>
<comment type="subunit">
    <text evidence="1">Part of the 50S ribosomal subunit. Contacts protein L29, and trigger factor when it is bound to the ribosome.</text>
</comment>
<comment type="similarity">
    <text evidence="1">Belongs to the universal ribosomal protein uL23 family.</text>
</comment>
<evidence type="ECO:0000255" key="1">
    <source>
        <dbReference type="HAMAP-Rule" id="MF_01369"/>
    </source>
</evidence>
<evidence type="ECO:0000305" key="2"/>
<accession>Q0BNS5</accession>
<protein>
    <recommendedName>
        <fullName evidence="1">Large ribosomal subunit protein uL23</fullName>
    </recommendedName>
    <alternativeName>
        <fullName evidence="2">50S ribosomal protein L23</fullName>
    </alternativeName>
</protein>
<organism>
    <name type="scientific">Francisella tularensis subsp. holarctica (strain OSU18)</name>
    <dbReference type="NCBI Taxonomy" id="393011"/>
    <lineage>
        <taxon>Bacteria</taxon>
        <taxon>Pseudomonadati</taxon>
        <taxon>Pseudomonadota</taxon>
        <taxon>Gammaproteobacteria</taxon>
        <taxon>Thiotrichales</taxon>
        <taxon>Francisellaceae</taxon>
        <taxon>Francisella</taxon>
    </lineage>
</organism>
<proteinExistence type="inferred from homology"/>
<sequence length="99" mass="11136">MSSQEKLLKTVIRPHVSDKTYGLSDANSTIVFEVARFANKQDVKNAVEKLFEVKVESVNILNVKGKARRFGRVEGRTKAWKKAYVKLAEGHDINFVGAE</sequence>